<comment type="subcellular location">
    <molecule>Matrix protein p19</molecule>
    <subcellularLocation>
        <location evidence="3">Virion</location>
    </subcellularLocation>
</comment>
<comment type="domain">
    <text evidence="3">Late-budding domains (L domains) are short sequence motifs essential for viral particle budding. They recruit proteins of the host ESCRT machinery (Endosomal Sorting Complex Required for Transport) or ESCRT-associated proteins. Gag contains one L domain: a PPXY motif which potentially interacts with the WW domain 3 of NEDD4 E3 ubiquitin ligase (Potential).</text>
</comment>
<comment type="PTM">
    <text evidence="1">Gag polyprotein: Specific enzymatic cleavages in vivo yield mature proteins.</text>
</comment>
<comment type="miscellaneous">
    <text evidence="3">Gag polyprotein: This protein is synthesized as a Gag-vYes polyprotein.</text>
</comment>
<dbReference type="EMBL" id="V01170">
    <property type="protein sequence ID" value="CAA24496.1"/>
    <property type="status" value="ALT_TERM"/>
    <property type="molecule type" value="Unassigned_RNA"/>
</dbReference>
<dbReference type="PIR" id="A03927">
    <property type="entry name" value="FOFVG9"/>
</dbReference>
<dbReference type="SMR" id="P03327"/>
<dbReference type="Proteomes" id="UP000164967">
    <property type="component" value="Genome"/>
</dbReference>
<dbReference type="GO" id="GO:0044423">
    <property type="term" value="C:virion component"/>
    <property type="evidence" value="ECO:0007669"/>
    <property type="project" value="UniProtKB-KW"/>
</dbReference>
<dbReference type="GO" id="GO:0039660">
    <property type="term" value="F:structural constituent of virion"/>
    <property type="evidence" value="ECO:0007669"/>
    <property type="project" value="UniProtKB-KW"/>
</dbReference>
<dbReference type="GO" id="GO:0039702">
    <property type="term" value="P:viral budding via host ESCRT complex"/>
    <property type="evidence" value="ECO:0007669"/>
    <property type="project" value="UniProtKB-KW"/>
</dbReference>
<dbReference type="FunFam" id="1.10.150.90:FF:000002">
    <property type="entry name" value="Gag polyprotein"/>
    <property type="match status" value="1"/>
</dbReference>
<dbReference type="Gene3D" id="1.10.150.90">
    <property type="entry name" value="Immunodeficiency lentiviruses, gag gene matrix protein p17"/>
    <property type="match status" value="1"/>
</dbReference>
<dbReference type="InterPro" id="IPR004028">
    <property type="entry name" value="Gag_M"/>
</dbReference>
<dbReference type="InterPro" id="IPR012344">
    <property type="entry name" value="Matrix_HIV/RSV_N"/>
</dbReference>
<dbReference type="InterPro" id="IPR010999">
    <property type="entry name" value="Retrovr_matrix"/>
</dbReference>
<dbReference type="Pfam" id="PF02813">
    <property type="entry name" value="Retro_M"/>
    <property type="match status" value="1"/>
</dbReference>
<dbReference type="SUPFAM" id="SSF47836">
    <property type="entry name" value="Retroviral matrix proteins"/>
    <property type="match status" value="1"/>
</dbReference>
<feature type="chain" id="PRO_0000442124" description="Gag-yes polyprotein">
    <location>
        <begin position="1"/>
        <end position="284"/>
    </location>
</feature>
<feature type="chain" id="PRO_0000040824" description="Matrix protein p19">
    <location>
        <begin position="1"/>
        <end position="155"/>
    </location>
</feature>
<feature type="chain" id="PRO_0000442125" description="p2A">
    <location>
        <begin position="156"/>
        <end position="166"/>
    </location>
</feature>
<feature type="chain" id="PRO_0000442126" description="p2B">
    <location>
        <begin position="167"/>
        <end position="179"/>
    </location>
</feature>
<feature type="chain" id="PRO_0000040825" description="p10, truncated">
    <location>
        <begin position="180"/>
        <end position="222"/>
    </location>
</feature>
<feature type="chain" id="PRO_0000442127" description="V-yes oncogene">
    <location>
        <begin position="223"/>
        <end position="284"/>
    </location>
</feature>
<feature type="region of interest" description="Disordered" evidence="2">
    <location>
        <begin position="128"/>
        <end position="149"/>
    </location>
</feature>
<feature type="region of interest" description="Disordered" evidence="2">
    <location>
        <begin position="188"/>
        <end position="236"/>
    </location>
</feature>
<feature type="region of interest" description="Disordered" evidence="2">
    <location>
        <begin position="249"/>
        <end position="284"/>
    </location>
</feature>
<feature type="short sequence motif" description="PPXY motif" evidence="1">
    <location>
        <begin position="174"/>
        <end position="177"/>
    </location>
</feature>
<feature type="compositionally biased region" description="Basic and acidic residues" evidence="2">
    <location>
        <begin position="128"/>
        <end position="141"/>
    </location>
</feature>
<feature type="compositionally biased region" description="Basic and acidic residues" evidence="2">
    <location>
        <begin position="191"/>
        <end position="212"/>
    </location>
</feature>
<feature type="compositionally biased region" description="Pro residues" evidence="2">
    <location>
        <begin position="225"/>
        <end position="236"/>
    </location>
</feature>
<feature type="compositionally biased region" description="Low complexity" evidence="2">
    <location>
        <begin position="249"/>
        <end position="265"/>
    </location>
</feature>
<feature type="site" description="Cleavage; by viral protease p15" evidence="1">
    <location>
        <begin position="155"/>
        <end position="156"/>
    </location>
</feature>
<feature type="site" description="Cleavage; by viral protease p15" evidence="1">
    <location>
        <begin position="166"/>
        <end position="167"/>
    </location>
</feature>
<feature type="site" description="Cleavage; by viral protease p15" evidence="1">
    <location>
        <begin position="179"/>
        <end position="180"/>
    </location>
</feature>
<feature type="site" description="Cleavage; by viral protease p15" evidence="1">
    <location>
        <begin position="231"/>
        <end position="232"/>
    </location>
</feature>
<proteinExistence type="inferred from homology"/>
<organism>
    <name type="scientific">Y73 avian sarcoma virus</name>
    <name type="common">Y73SV</name>
    <name type="synonym">Avian sarcoma virus (strain Y73)</name>
    <dbReference type="NCBI Taxonomy" id="11884"/>
    <lineage>
        <taxon>Viruses</taxon>
        <taxon>Riboviria</taxon>
        <taxon>Pararnavirae</taxon>
        <taxon>Artverviricota</taxon>
        <taxon>Revtraviricetes</taxon>
        <taxon>Ortervirales</taxon>
        <taxon>Retroviridae</taxon>
        <taxon>Orthoretrovirinae</taxon>
        <taxon>Alpharetrovirus</taxon>
    </lineage>
</organism>
<protein>
    <recommendedName>
        <fullName>Gag-yes polyprotein</fullName>
    </recommendedName>
    <component>
        <recommendedName>
            <fullName>Matrix protein p19</fullName>
        </recommendedName>
    </component>
    <component>
        <recommendedName>
            <fullName>p2A</fullName>
        </recommendedName>
    </component>
    <component>
        <recommendedName>
            <fullName>p2B</fullName>
        </recommendedName>
    </component>
    <component>
        <recommendedName>
            <fullName>p10, truncated</fullName>
        </recommendedName>
    </component>
    <component>
        <recommendedName>
            <fullName>V-yes oncogene</fullName>
        </recommendedName>
    </component>
</protein>
<organismHost>
    <name type="scientific">Galliformes</name>
    <dbReference type="NCBI Taxonomy" id="8976"/>
</organismHost>
<sequence>MEAVIKVISSACKTYCGKTSPSKKEIGAMLSLLQKEGLLMSPSDLYSPGSWDPITAALSQRAMVLGKSGELKTWGLVLGALKAAREEQVTSEQAKFWLGLGGGRVSPPGPECIEKPATERRIDKGEEVGETTVQRDAKMAPEETATPKTVGTSCYHCGTASGCNCATATASAPPPPYVGSGLCPSLAGVGEQRKRGDDTPRGAEQPRAEPRHTGLTLGPARSARLPPPAPLPSSLPLLPPFPPRVAAVPGGAGGAPLPSLSPSFFHPRRRGRAEATVGCIKSKE</sequence>
<gene>
    <name type="primary">gag</name>
</gene>
<reference key="1">
    <citation type="journal article" date="1982" name="Nature">
        <title>Avian sarcoma virus Y73 genome sequence and structural similarity of its transforming gene product to that of Rous sarcoma virus.</title>
        <authorList>
            <person name="Kitamura N."/>
            <person name="Kitamura A."/>
            <person name="Toyoshima K."/>
            <person name="Hirayama Y."/>
            <person name="Yoshida M."/>
        </authorList>
    </citation>
    <scope>NUCLEOTIDE SEQUENCE</scope>
</reference>
<keyword id="KW-0945">Host-virus interaction</keyword>
<keyword id="KW-0553">Oncogene</keyword>
<keyword id="KW-1198">Viral budding</keyword>
<keyword id="KW-1187">Viral budding via the host ESCRT complexes</keyword>
<keyword id="KW-0468">Viral matrix protein</keyword>
<keyword id="KW-1188">Viral release from host cell</keyword>
<keyword id="KW-0946">Virion</keyword>
<evidence type="ECO:0000250" key="1">
    <source>
        <dbReference type="UniProtKB" id="P03322"/>
    </source>
</evidence>
<evidence type="ECO:0000256" key="2">
    <source>
        <dbReference type="SAM" id="MobiDB-lite"/>
    </source>
</evidence>
<evidence type="ECO:0000305" key="3"/>
<accession>P03327</accession>
<name>GAG_AVISY</name>